<reference key="1">
    <citation type="journal article" date="1992" name="Biochem. J.">
        <title>Trehalase from male accessory gland of an insect, Tenebrio molitor. cDNA sequencing and developmental profile of the gene expression.</title>
        <authorList>
            <person name="Takiguchi M."/>
            <person name="Niimi T."/>
            <person name="Su Z.-H."/>
            <person name="Yaginuma T."/>
        </authorList>
    </citation>
    <scope>NUCLEOTIDE SEQUENCE [MRNA]</scope>
    <source>
        <tissue>Male accessory gland</tissue>
    </source>
</reference>
<accession>P32359</accession>
<dbReference type="EC" id="3.2.1.28"/>
<dbReference type="EMBL" id="D11338">
    <property type="protein sequence ID" value="BAA01951.1"/>
    <property type="molecule type" value="mRNA"/>
</dbReference>
<dbReference type="PIR" id="S27163">
    <property type="entry name" value="S27163"/>
</dbReference>
<dbReference type="SMR" id="P32359"/>
<dbReference type="CAZy" id="GH37">
    <property type="family name" value="Glycoside Hydrolase Family 37"/>
</dbReference>
<dbReference type="BRENDA" id="3.2.1.28">
    <property type="organism ID" value="6230"/>
</dbReference>
<dbReference type="GO" id="GO:0005576">
    <property type="term" value="C:extracellular region"/>
    <property type="evidence" value="ECO:0007669"/>
    <property type="project" value="UniProtKB-SubCell"/>
</dbReference>
<dbReference type="GO" id="GO:0004555">
    <property type="term" value="F:alpha,alpha-trehalase activity"/>
    <property type="evidence" value="ECO:0007669"/>
    <property type="project" value="UniProtKB-EC"/>
</dbReference>
<dbReference type="GO" id="GO:0005993">
    <property type="term" value="P:trehalose catabolic process"/>
    <property type="evidence" value="ECO:0007669"/>
    <property type="project" value="TreeGrafter"/>
</dbReference>
<dbReference type="Gene3D" id="1.50.10.10">
    <property type="match status" value="1"/>
</dbReference>
<dbReference type="InterPro" id="IPR008928">
    <property type="entry name" value="6-hairpin_glycosidase_sf"/>
</dbReference>
<dbReference type="InterPro" id="IPR012341">
    <property type="entry name" value="6hp_glycosidase-like_sf"/>
</dbReference>
<dbReference type="InterPro" id="IPR001661">
    <property type="entry name" value="Glyco_hydro_37"/>
</dbReference>
<dbReference type="InterPro" id="IPR018232">
    <property type="entry name" value="Glyco_hydro_37_CS"/>
</dbReference>
<dbReference type="PANTHER" id="PTHR23403">
    <property type="entry name" value="TREHALASE"/>
    <property type="match status" value="1"/>
</dbReference>
<dbReference type="PANTHER" id="PTHR23403:SF1">
    <property type="entry name" value="TREHALASE"/>
    <property type="match status" value="1"/>
</dbReference>
<dbReference type="Pfam" id="PF01204">
    <property type="entry name" value="Trehalase"/>
    <property type="match status" value="1"/>
</dbReference>
<dbReference type="PRINTS" id="PR00744">
    <property type="entry name" value="GLHYDRLASE37"/>
</dbReference>
<dbReference type="SUPFAM" id="SSF48208">
    <property type="entry name" value="Six-hairpin glycosidases"/>
    <property type="match status" value="1"/>
</dbReference>
<dbReference type="PROSITE" id="PS00927">
    <property type="entry name" value="TREHALASE_1"/>
    <property type="match status" value="1"/>
</dbReference>
<dbReference type="PROSITE" id="PS00928">
    <property type="entry name" value="TREHALASE_2"/>
    <property type="match status" value="1"/>
</dbReference>
<sequence>MIPFLLMVAFADTVLQVSAQSQPSCDSKVYCQGKLLHVVEMSRIFNDSKTFVELKMINDEQTTLENFDNFLRDTNHKRTRADLMKFVSDNFKQENEFESWTPTDFTDNPTLLSRIEDKTIRQFAQDLVKIWPTLARKVKKEVLDYPEHYSLLPVDNGFIIPGGRFTEFYYWDSYWIVEGLLLSDMHETVRGMLDNFLSIVEKYGFIPNGARVFYLNRSQPPLLTLMVSLYVSATNDMEWLAKNIRTIDTELRFWLNNRLVDVVKDGIVYKLAQYNSNSGSPRPESYYEDVTTASVFSDERDKAELYMDLKSAAESGWDFSSRWIVDEYGGTRGNLSALHTRRIIPVDLNAFLCQAFQKLSEFYQTLGDYPNATFWSKLVKIWQHSIEMVHYNRDDGIWYDWDNELSQHRRMFFPSNFAPLWSETFDSRNAEILGEMAAEYFITQNMMDYHGGIPTSLSHTGEQWDYPNAWPPMQSIIVMGLDKSGSYRAKQLARELARRWVKANLIGFRQTGEMFEKYNVEVPGQNGGGGEYVVQSGFGWTNGVVLEFINQFFTT</sequence>
<organism>
    <name type="scientific">Tenebrio molitor</name>
    <name type="common">Yellow mealworm beetle</name>
    <dbReference type="NCBI Taxonomy" id="7067"/>
    <lineage>
        <taxon>Eukaryota</taxon>
        <taxon>Metazoa</taxon>
        <taxon>Ecdysozoa</taxon>
        <taxon>Arthropoda</taxon>
        <taxon>Hexapoda</taxon>
        <taxon>Insecta</taxon>
        <taxon>Pterygota</taxon>
        <taxon>Neoptera</taxon>
        <taxon>Endopterygota</taxon>
        <taxon>Coleoptera</taxon>
        <taxon>Polyphaga</taxon>
        <taxon>Cucujiformia</taxon>
        <taxon>Tenebrionidae</taxon>
        <taxon>Tenebrio</taxon>
    </lineage>
</organism>
<name>TREA_TENMO</name>
<feature type="signal peptide" evidence="2">
    <location>
        <begin position="1"/>
        <end position="16"/>
    </location>
</feature>
<feature type="chain" id="PRO_0000012059" description="Trehalase">
    <location>
        <begin position="17"/>
        <end position="555"/>
    </location>
</feature>
<feature type="active site" description="Proton donor/acceptor" evidence="1">
    <location>
        <position position="318"/>
    </location>
</feature>
<feature type="active site" description="Proton donor/acceptor" evidence="1">
    <location>
        <position position="516"/>
    </location>
</feature>
<feature type="binding site" evidence="1">
    <location>
        <position position="164"/>
    </location>
    <ligand>
        <name>substrate</name>
    </ligand>
</feature>
<feature type="binding site" evidence="1">
    <location>
        <begin position="171"/>
        <end position="172"/>
    </location>
    <ligand>
        <name>substrate</name>
    </ligand>
</feature>
<feature type="binding site" evidence="1">
    <location>
        <position position="208"/>
    </location>
    <ligand>
        <name>substrate</name>
    </ligand>
</feature>
<feature type="binding site" evidence="1">
    <location>
        <begin position="217"/>
        <end position="219"/>
    </location>
    <ligand>
        <name>substrate</name>
    </ligand>
</feature>
<feature type="binding site" evidence="1">
    <location>
        <begin position="282"/>
        <end position="284"/>
    </location>
    <ligand>
        <name>substrate</name>
    </ligand>
</feature>
<feature type="binding site" evidence="1">
    <location>
        <position position="316"/>
    </location>
    <ligand>
        <name>substrate</name>
    </ligand>
</feature>
<feature type="binding site" evidence="1">
    <location>
        <position position="531"/>
    </location>
    <ligand>
        <name>substrate</name>
    </ligand>
</feature>
<feature type="glycosylation site" description="N-linked (GlcNAc...) asparagine" evidence="2">
    <location>
        <position position="46"/>
    </location>
</feature>
<feature type="glycosylation site" description="N-linked (GlcNAc...) asparagine" evidence="2">
    <location>
        <position position="216"/>
    </location>
</feature>
<feature type="glycosylation site" description="N-linked (GlcNAc...) asparagine" evidence="2">
    <location>
        <position position="334"/>
    </location>
</feature>
<feature type="glycosylation site" description="N-linked (GlcNAc...) asparagine" evidence="2">
    <location>
        <position position="371"/>
    </location>
</feature>
<protein>
    <recommendedName>
        <fullName>Trehalase</fullName>
        <ecNumber>3.2.1.28</ecNumber>
    </recommendedName>
    <alternativeName>
        <fullName>Alpha,alpha-trehalase</fullName>
    </alternativeName>
    <alternativeName>
        <fullName>Alpha,alpha-trehalose glucohydrolase</fullName>
    </alternativeName>
</protein>
<proteinExistence type="evidence at transcript level"/>
<comment type="catalytic activity">
    <reaction>
        <text>alpha,alpha-trehalose + H2O = alpha-D-glucose + beta-D-glucose</text>
        <dbReference type="Rhea" id="RHEA:32675"/>
        <dbReference type="ChEBI" id="CHEBI:15377"/>
        <dbReference type="ChEBI" id="CHEBI:15903"/>
        <dbReference type="ChEBI" id="CHEBI:16551"/>
        <dbReference type="ChEBI" id="CHEBI:17925"/>
        <dbReference type="EC" id="3.2.1.28"/>
    </reaction>
</comment>
<comment type="subcellular location">
    <subcellularLocation>
        <location>Secreted</location>
    </subcellularLocation>
    <text>It is incorporated into the wall of the spermatophore.</text>
</comment>
<comment type="tissue specificity">
    <text>Bean-shaped accessory glands (bags).</text>
</comment>
<comment type="induction">
    <text>It is increased from 1 to 2 days after adult ecdysis, but decreased after 4 days. It is dependent on ecdysteroid hormone during pupal stage.</text>
</comment>
<comment type="similarity">
    <text evidence="3">Belongs to the glycosyl hydrolase 37 family.</text>
</comment>
<keyword id="KW-0325">Glycoprotein</keyword>
<keyword id="KW-0326">Glycosidase</keyword>
<keyword id="KW-0378">Hydrolase</keyword>
<keyword id="KW-0964">Secreted</keyword>
<keyword id="KW-0732">Signal</keyword>
<evidence type="ECO:0000250" key="1"/>
<evidence type="ECO:0000255" key="2"/>
<evidence type="ECO:0000305" key="3"/>